<dbReference type="EMBL" id="AB218802">
    <property type="protein sequence ID" value="BAE00061.1"/>
    <property type="molecule type" value="Genomic_DNA"/>
</dbReference>
<dbReference type="EMBL" id="AB218803">
    <property type="protein sequence ID" value="BAI39646.1"/>
    <property type="status" value="ALT_FRAME"/>
    <property type="molecule type" value="mRNA"/>
</dbReference>
<dbReference type="SMR" id="Q4R1B9"/>
<dbReference type="OMA" id="HEAEYTH"/>
<dbReference type="PHI-base" id="PHI:2065"/>
<dbReference type="GO" id="GO:0005634">
    <property type="term" value="C:nucleus"/>
    <property type="evidence" value="ECO:0007669"/>
    <property type="project" value="UniProtKB-SubCell"/>
</dbReference>
<dbReference type="GO" id="GO:0003700">
    <property type="term" value="F:DNA-binding transcription factor activity"/>
    <property type="evidence" value="ECO:0007669"/>
    <property type="project" value="TreeGrafter"/>
</dbReference>
<dbReference type="GO" id="GO:0043565">
    <property type="term" value="F:sequence-specific DNA binding"/>
    <property type="evidence" value="ECO:0007669"/>
    <property type="project" value="TreeGrafter"/>
</dbReference>
<dbReference type="GO" id="GO:0048315">
    <property type="term" value="P:conidium formation"/>
    <property type="evidence" value="ECO:0007669"/>
    <property type="project" value="UniProtKB-KW"/>
</dbReference>
<dbReference type="GO" id="GO:0045944">
    <property type="term" value="P:positive regulation of transcription by RNA polymerase II"/>
    <property type="evidence" value="ECO:0007669"/>
    <property type="project" value="TreeGrafter"/>
</dbReference>
<dbReference type="GO" id="GO:0030435">
    <property type="term" value="P:sporulation resulting in formation of a cellular spore"/>
    <property type="evidence" value="ECO:0007669"/>
    <property type="project" value="UniProtKB-KW"/>
</dbReference>
<dbReference type="FunFam" id="3.10.260.10:FF:000003">
    <property type="entry name" value="Ascospore maturation 1 protein"/>
    <property type="match status" value="1"/>
</dbReference>
<dbReference type="Gene3D" id="3.10.260.10">
    <property type="entry name" value="Transcription regulator HTH, APSES-type DNA-binding domain"/>
    <property type="match status" value="1"/>
</dbReference>
<dbReference type="InterPro" id="IPR029790">
    <property type="entry name" value="EFG1/Phd1/StuA"/>
</dbReference>
<dbReference type="InterPro" id="IPR036887">
    <property type="entry name" value="HTH_APSES_sf"/>
</dbReference>
<dbReference type="InterPro" id="IPR018004">
    <property type="entry name" value="KilA/APSES_HTH"/>
</dbReference>
<dbReference type="InterPro" id="IPR003163">
    <property type="entry name" value="Tscrpt_reg_HTH_APSES-type"/>
</dbReference>
<dbReference type="PANTHER" id="PTHR47792">
    <property type="entry name" value="PROTEIN SOK2-RELATED"/>
    <property type="match status" value="1"/>
</dbReference>
<dbReference type="PANTHER" id="PTHR47792:SF1">
    <property type="entry name" value="PROTEIN SOK2-RELATED"/>
    <property type="match status" value="1"/>
</dbReference>
<dbReference type="Pfam" id="PF04383">
    <property type="entry name" value="KilA-N"/>
    <property type="match status" value="1"/>
</dbReference>
<dbReference type="SMART" id="SM01252">
    <property type="entry name" value="KilA-N"/>
    <property type="match status" value="1"/>
</dbReference>
<dbReference type="SUPFAM" id="SSF54616">
    <property type="entry name" value="DNA-binding domain of Mlu1-box binding protein MBP1"/>
    <property type="match status" value="1"/>
</dbReference>
<dbReference type="PROSITE" id="PS51299">
    <property type="entry name" value="HTH_APSES"/>
    <property type="match status" value="1"/>
</dbReference>
<organism>
    <name type="scientific">Pyricularia oryzae</name>
    <name type="common">Rice blast fungus</name>
    <name type="synonym">Magnaporthe oryzae</name>
    <dbReference type="NCBI Taxonomy" id="318829"/>
    <lineage>
        <taxon>Eukaryota</taxon>
        <taxon>Fungi</taxon>
        <taxon>Dikarya</taxon>
        <taxon>Ascomycota</taxon>
        <taxon>Pezizomycotina</taxon>
        <taxon>Sordariomycetes</taxon>
        <taxon>Sordariomycetidae</taxon>
        <taxon>Magnaporthales</taxon>
        <taxon>Pyriculariaceae</taxon>
        <taxon>Pyricularia</taxon>
    </lineage>
</organism>
<proteinExistence type="evidence at transcript level"/>
<sequence>MNQGHDMYYQQHMSAGPTQQPPTVTSYNPQPPIMQPSHGSYPAPPQPYGGYPYTNGMPSPQGPPVPGQMGPGSVLPSIAGHHGQAPGPVANQYSGFDTSGQIAPPGMKPRVTATLWEDEGSLCFQVEARGVCVARREDNHMINGTKLLNVAGMTRGRRDGILKSEKMRHVVKIGPMHLKGVWIPFERALDFANKEKITELLYPLFVHNISALLYHPANQNRNNQLMAAAERRKAETGGMRNPQGPPGLPALHHHSMSQNGSQSLSGNIGRPSLDRAHTFPTPPTSASSAVNMGSSDSFTWPPHQAMSNGQQNPMSIDTSLSNTRSMPTTPATTPPGSTLQSMQAYPPASQSYDGSRQLYNAPQLQQSPYQPTSTSPQDRSLYNQATYVKSEMGPPSARPMGSVLPGDHQNDQKPVNGLMHPPQGADQGHNNGVEDEADHEHDPEYTHDSRTYDNSQSQYNYTAPPVSSISSEQAHVSTDMPPGGQHGNSGRSTPRSAAAPQAYYQQAYSTSPRSATHQSTSNLYNVMSNDRGSTTNGSANGDVYSQSTDLSNGYATPVTNGNANLKRGRDDDDDRSSSSGQMDLKRRKTLMDNPISSPVYETMNRPAAAIAHPVSRRR</sequence>
<gene>
    <name evidence="5" type="primary">MSTU1</name>
</gene>
<protein>
    <recommendedName>
        <fullName evidence="6">Cell pattern formation-associated protein MSTU1</fullName>
    </recommendedName>
    <alternativeName>
        <fullName evidence="1">Stunted protein A</fullName>
    </alternativeName>
</protein>
<comment type="function">
    <text evidence="1 4">Transcription factor that regulates asexual reproduction (PubMed:19661696). Binds the StuA-response elements (StRE) with the consensus sequence 5'-(A/T)CGCG(T/A)N(A/C)-3' at the promoters of target genes (By similarity). Required for appressorium-mediated infection of rice leaves due to its involvement in the mobilization of lipids and glycogen (PubMed:19661696).</text>
</comment>
<comment type="subcellular location">
    <subcellularLocation>
        <location evidence="1">Nucleus</location>
    </subcellularLocation>
</comment>
<comment type="disruption phenotype">
    <text evidence="4">Leads to reduced conidiation and mycelial growth (PubMed:19661696). Delays the transfer of conidial glycogen and lipid droplets and decreases efficiency of appressorium-mediated invasion of rice leaves (PubMed:19661696).</text>
</comment>
<comment type="similarity">
    <text evidence="6">Belongs to the EFG1/PHD1/stuA family.</text>
</comment>
<comment type="sequence caution" evidence="6">
    <conflict type="frameshift">
        <sequence resource="EMBL-CDS" id="BAI39646"/>
    </conflict>
</comment>
<evidence type="ECO:0000250" key="1">
    <source>
        <dbReference type="UniProtKB" id="P36011"/>
    </source>
</evidence>
<evidence type="ECO:0000255" key="2">
    <source>
        <dbReference type="PROSITE-ProRule" id="PRU00630"/>
    </source>
</evidence>
<evidence type="ECO:0000256" key="3">
    <source>
        <dbReference type="SAM" id="MobiDB-lite"/>
    </source>
</evidence>
<evidence type="ECO:0000269" key="4">
    <source>
    </source>
</evidence>
<evidence type="ECO:0000303" key="5">
    <source>
    </source>
</evidence>
<evidence type="ECO:0000305" key="6"/>
<feature type="chain" id="PRO_0000435979" description="Cell pattern formation-associated protein MSTU1">
    <location>
        <begin position="1"/>
        <end position="618"/>
    </location>
</feature>
<feature type="domain" description="HTH APSES-type" evidence="2">
    <location>
        <begin position="110"/>
        <end position="216"/>
    </location>
</feature>
<feature type="DNA-binding region" description="H-T-H motif" evidence="2">
    <location>
        <begin position="144"/>
        <end position="165"/>
    </location>
</feature>
<feature type="region of interest" description="Disordered" evidence="3">
    <location>
        <begin position="13"/>
        <end position="105"/>
    </location>
</feature>
<feature type="region of interest" description="Disordered" evidence="3">
    <location>
        <begin position="229"/>
        <end position="355"/>
    </location>
</feature>
<feature type="region of interest" description="Disordered" evidence="3">
    <location>
        <begin position="390"/>
        <end position="618"/>
    </location>
</feature>
<feature type="region of interest" description="Nuclear localization domain" evidence="1">
    <location>
        <begin position="566"/>
        <end position="588"/>
    </location>
</feature>
<feature type="compositionally biased region" description="Polar residues" evidence="3">
    <location>
        <begin position="13"/>
        <end position="28"/>
    </location>
</feature>
<feature type="compositionally biased region" description="Low complexity" evidence="3">
    <location>
        <begin position="48"/>
        <end position="59"/>
    </location>
</feature>
<feature type="compositionally biased region" description="Polar residues" evidence="3">
    <location>
        <begin position="91"/>
        <end position="101"/>
    </location>
</feature>
<feature type="compositionally biased region" description="Polar residues" evidence="3">
    <location>
        <begin position="256"/>
        <end position="266"/>
    </location>
</feature>
<feature type="compositionally biased region" description="Polar residues" evidence="3">
    <location>
        <begin position="284"/>
        <end position="298"/>
    </location>
</feature>
<feature type="compositionally biased region" description="Polar residues" evidence="3">
    <location>
        <begin position="305"/>
        <end position="326"/>
    </location>
</feature>
<feature type="compositionally biased region" description="Polar residues" evidence="3">
    <location>
        <begin position="336"/>
        <end position="355"/>
    </location>
</feature>
<feature type="compositionally biased region" description="Basic and acidic residues" evidence="3">
    <location>
        <begin position="438"/>
        <end position="451"/>
    </location>
</feature>
<feature type="compositionally biased region" description="Polar residues" evidence="3">
    <location>
        <begin position="452"/>
        <end position="476"/>
    </location>
</feature>
<feature type="compositionally biased region" description="Low complexity" evidence="3">
    <location>
        <begin position="494"/>
        <end position="512"/>
    </location>
</feature>
<feature type="compositionally biased region" description="Polar residues" evidence="3">
    <location>
        <begin position="513"/>
        <end position="563"/>
    </location>
</feature>
<name>STUA_PYROR</name>
<accession>Q4R1B9</accession>
<accession>C8KGA5</accession>
<keyword id="KW-0183">Conidiation</keyword>
<keyword id="KW-0238">DNA-binding</keyword>
<keyword id="KW-0539">Nucleus</keyword>
<keyword id="KW-0749">Sporulation</keyword>
<keyword id="KW-0804">Transcription</keyword>
<keyword id="KW-0805">Transcription regulation</keyword>
<keyword id="KW-0843">Virulence</keyword>
<reference key="1">
    <citation type="journal article" date="2009" name="Biosci. Biotechnol. Biochem.">
        <title>Mstu1, an APSES transcription factor, is required for appressorium-mediated infection in Magnaporthe grisea.</title>
        <authorList>
            <person name="Nishimura M."/>
            <person name="Fukada J."/>
            <person name="Moriwaki A."/>
            <person name="Fujikawa T."/>
            <person name="Ohashi M."/>
            <person name="Hibi T."/>
            <person name="Hayashi N."/>
        </authorList>
    </citation>
    <scope>NUCLEOTIDE SEQUENCE [GENOMIC DNA / MRNA]</scope>
    <scope>FUNCTION</scope>
    <scope>DISRUPTION PHENOTYPE</scope>
    <source>
        <strain>Guyane 11</strain>
    </source>
</reference>